<organism>
    <name type="scientific">Thermomicrobium roseum (strain ATCC 27502 / DSM 5159 / P-2)</name>
    <dbReference type="NCBI Taxonomy" id="309801"/>
    <lineage>
        <taxon>Bacteria</taxon>
        <taxon>Pseudomonadati</taxon>
        <taxon>Thermomicrobiota</taxon>
        <taxon>Thermomicrobia</taxon>
        <taxon>Thermomicrobiales</taxon>
        <taxon>Thermomicrobiaceae</taxon>
        <taxon>Thermomicrobium</taxon>
    </lineage>
</organism>
<accession>B9L0W3</accession>
<sequence>MSRLLPSTTNQHPTSPSFDSVVILDYGSQYAQLIARRVRDAHVYCELVPYDTDWSALKHLSPKGIILSGGPASVYEPDAPQLPSWVLESGLPVLGICYGMQLLAHTLGGRVAPAQRREYGPAVVERVADHPIFAGLPARFDVWMSHGDRIDALPPGFEVLARSANAPYAAMARDHLIGLQFHPEVAHTPLGSVILRNFLFDVCGCAPTWTAESFVEQAIREIRERVGKDRVLLALSGGVDSSVAAALIHRAIGDQLTPVFVDTGLLREGEAETIREVFGRHFRMPLVAIDARQRFLVRLRGVSDPEQKRRLIGEEFVRVFEEIARSQGPFRFLAQGTLYPDVIESAAPGASRTAAKIKTHHNVGGLPQDLEFELLEPLRYLFKDEVRAIGRLLGLPEEIVQRQPFPGPGLAVRILGEVTEEALAIVRRADTIVREEVEAAGLSDGLWQFFAVLLPVHSTGVMGDQRTYARVIAIRAVTSTDAMTADWARLPHDLLARLANRIVNEVPGVNRVVYDITSKPPATIEWE</sequence>
<feature type="chain" id="PRO_1000133389" description="GMP synthase [glutamine-hydrolyzing]">
    <location>
        <begin position="1"/>
        <end position="527"/>
    </location>
</feature>
<feature type="domain" description="Glutamine amidotransferase type-1" evidence="1">
    <location>
        <begin position="20"/>
        <end position="208"/>
    </location>
</feature>
<feature type="domain" description="GMPS ATP-PPase" evidence="1">
    <location>
        <begin position="209"/>
        <end position="402"/>
    </location>
</feature>
<feature type="active site" description="Nucleophile" evidence="1">
    <location>
        <position position="97"/>
    </location>
</feature>
<feature type="active site" evidence="1">
    <location>
        <position position="182"/>
    </location>
</feature>
<feature type="active site" evidence="1">
    <location>
        <position position="184"/>
    </location>
</feature>
<feature type="binding site" evidence="1">
    <location>
        <begin position="236"/>
        <end position="242"/>
    </location>
    <ligand>
        <name>ATP</name>
        <dbReference type="ChEBI" id="CHEBI:30616"/>
    </ligand>
</feature>
<name>GUAA_THERP</name>
<reference key="1">
    <citation type="journal article" date="2009" name="PLoS ONE">
        <title>Complete genome sequence of the aerobic CO-oxidizing thermophile Thermomicrobium roseum.</title>
        <authorList>
            <person name="Wu D."/>
            <person name="Raymond J."/>
            <person name="Wu M."/>
            <person name="Chatterji S."/>
            <person name="Ren Q."/>
            <person name="Graham J.E."/>
            <person name="Bryant D.A."/>
            <person name="Robb F."/>
            <person name="Colman A."/>
            <person name="Tallon L.J."/>
            <person name="Badger J.H."/>
            <person name="Madupu R."/>
            <person name="Ward N.L."/>
            <person name="Eisen J.A."/>
        </authorList>
    </citation>
    <scope>NUCLEOTIDE SEQUENCE [LARGE SCALE GENOMIC DNA]</scope>
    <source>
        <strain>ATCC 27502 / DSM 5159 / P-2</strain>
    </source>
</reference>
<keyword id="KW-0067">ATP-binding</keyword>
<keyword id="KW-0315">Glutamine amidotransferase</keyword>
<keyword id="KW-0332">GMP biosynthesis</keyword>
<keyword id="KW-0436">Ligase</keyword>
<keyword id="KW-0547">Nucleotide-binding</keyword>
<keyword id="KW-0658">Purine biosynthesis</keyword>
<keyword id="KW-1185">Reference proteome</keyword>
<proteinExistence type="inferred from homology"/>
<evidence type="ECO:0000255" key="1">
    <source>
        <dbReference type="HAMAP-Rule" id="MF_00344"/>
    </source>
</evidence>
<gene>
    <name evidence="1" type="primary">guaA</name>
    <name type="ordered locus">trd_1184</name>
</gene>
<comment type="function">
    <text evidence="1">Catalyzes the synthesis of GMP from XMP.</text>
</comment>
<comment type="catalytic activity">
    <reaction evidence="1">
        <text>XMP + L-glutamine + ATP + H2O = GMP + L-glutamate + AMP + diphosphate + 2 H(+)</text>
        <dbReference type="Rhea" id="RHEA:11680"/>
        <dbReference type="ChEBI" id="CHEBI:15377"/>
        <dbReference type="ChEBI" id="CHEBI:15378"/>
        <dbReference type="ChEBI" id="CHEBI:29985"/>
        <dbReference type="ChEBI" id="CHEBI:30616"/>
        <dbReference type="ChEBI" id="CHEBI:33019"/>
        <dbReference type="ChEBI" id="CHEBI:57464"/>
        <dbReference type="ChEBI" id="CHEBI:58115"/>
        <dbReference type="ChEBI" id="CHEBI:58359"/>
        <dbReference type="ChEBI" id="CHEBI:456215"/>
        <dbReference type="EC" id="6.3.5.2"/>
    </reaction>
</comment>
<comment type="pathway">
    <text evidence="1">Purine metabolism; GMP biosynthesis; GMP from XMP (L-Gln route): step 1/1.</text>
</comment>
<comment type="subunit">
    <text evidence="1">Homodimer.</text>
</comment>
<protein>
    <recommendedName>
        <fullName evidence="1">GMP synthase [glutamine-hydrolyzing]</fullName>
        <ecNumber evidence="1">6.3.5.2</ecNumber>
    </recommendedName>
    <alternativeName>
        <fullName evidence="1">GMP synthetase</fullName>
    </alternativeName>
    <alternativeName>
        <fullName evidence="1">Glutamine amidotransferase</fullName>
    </alternativeName>
</protein>
<dbReference type="EC" id="6.3.5.2" evidence="1"/>
<dbReference type="EMBL" id="CP001275">
    <property type="protein sequence ID" value="ACM05148.1"/>
    <property type="molecule type" value="Genomic_DNA"/>
</dbReference>
<dbReference type="RefSeq" id="WP_015922137.1">
    <property type="nucleotide sequence ID" value="NC_011959.1"/>
</dbReference>
<dbReference type="SMR" id="B9L0W3"/>
<dbReference type="STRING" id="309801.trd_1184"/>
<dbReference type="MEROPS" id="C26.957"/>
<dbReference type="KEGG" id="tro:trd_1184"/>
<dbReference type="eggNOG" id="COG0518">
    <property type="taxonomic scope" value="Bacteria"/>
</dbReference>
<dbReference type="eggNOG" id="COG0519">
    <property type="taxonomic scope" value="Bacteria"/>
</dbReference>
<dbReference type="HOGENOM" id="CLU_014340_0_5_0"/>
<dbReference type="OrthoDB" id="9802219at2"/>
<dbReference type="UniPathway" id="UPA00189">
    <property type="reaction ID" value="UER00296"/>
</dbReference>
<dbReference type="Proteomes" id="UP000000447">
    <property type="component" value="Chromosome"/>
</dbReference>
<dbReference type="GO" id="GO:0005829">
    <property type="term" value="C:cytosol"/>
    <property type="evidence" value="ECO:0007669"/>
    <property type="project" value="TreeGrafter"/>
</dbReference>
<dbReference type="GO" id="GO:0005524">
    <property type="term" value="F:ATP binding"/>
    <property type="evidence" value="ECO:0007669"/>
    <property type="project" value="UniProtKB-UniRule"/>
</dbReference>
<dbReference type="GO" id="GO:0003921">
    <property type="term" value="F:GMP synthase activity"/>
    <property type="evidence" value="ECO:0007669"/>
    <property type="project" value="InterPro"/>
</dbReference>
<dbReference type="CDD" id="cd01742">
    <property type="entry name" value="GATase1_GMP_Synthase"/>
    <property type="match status" value="1"/>
</dbReference>
<dbReference type="CDD" id="cd01997">
    <property type="entry name" value="GMP_synthase_C"/>
    <property type="match status" value="1"/>
</dbReference>
<dbReference type="FunFam" id="3.30.300.10:FF:000002">
    <property type="entry name" value="GMP synthase [glutamine-hydrolyzing]"/>
    <property type="match status" value="1"/>
</dbReference>
<dbReference type="FunFam" id="3.40.50.620:FF:000001">
    <property type="entry name" value="GMP synthase [glutamine-hydrolyzing]"/>
    <property type="match status" value="1"/>
</dbReference>
<dbReference type="FunFam" id="3.40.50.880:FF:000001">
    <property type="entry name" value="GMP synthase [glutamine-hydrolyzing]"/>
    <property type="match status" value="1"/>
</dbReference>
<dbReference type="Gene3D" id="3.30.300.10">
    <property type="match status" value="1"/>
</dbReference>
<dbReference type="Gene3D" id="3.40.50.880">
    <property type="match status" value="1"/>
</dbReference>
<dbReference type="Gene3D" id="3.40.50.620">
    <property type="entry name" value="HUPs"/>
    <property type="match status" value="1"/>
</dbReference>
<dbReference type="HAMAP" id="MF_00344">
    <property type="entry name" value="GMP_synthase"/>
    <property type="match status" value="1"/>
</dbReference>
<dbReference type="InterPro" id="IPR029062">
    <property type="entry name" value="Class_I_gatase-like"/>
</dbReference>
<dbReference type="InterPro" id="IPR017926">
    <property type="entry name" value="GATASE"/>
</dbReference>
<dbReference type="InterPro" id="IPR001674">
    <property type="entry name" value="GMP_synth_C"/>
</dbReference>
<dbReference type="InterPro" id="IPR004739">
    <property type="entry name" value="GMP_synth_GATase"/>
</dbReference>
<dbReference type="InterPro" id="IPR022955">
    <property type="entry name" value="GMP_synthase"/>
</dbReference>
<dbReference type="InterPro" id="IPR025777">
    <property type="entry name" value="GMPS_ATP_PPase_dom"/>
</dbReference>
<dbReference type="InterPro" id="IPR022310">
    <property type="entry name" value="NAD/GMP_synthase"/>
</dbReference>
<dbReference type="InterPro" id="IPR014729">
    <property type="entry name" value="Rossmann-like_a/b/a_fold"/>
</dbReference>
<dbReference type="NCBIfam" id="TIGR00884">
    <property type="entry name" value="guaA_Cterm"/>
    <property type="match status" value="1"/>
</dbReference>
<dbReference type="NCBIfam" id="TIGR00888">
    <property type="entry name" value="guaA_Nterm"/>
    <property type="match status" value="1"/>
</dbReference>
<dbReference type="NCBIfam" id="NF000848">
    <property type="entry name" value="PRK00074.1"/>
    <property type="match status" value="1"/>
</dbReference>
<dbReference type="PANTHER" id="PTHR11922:SF2">
    <property type="entry name" value="GMP SYNTHASE [GLUTAMINE-HYDROLYZING]"/>
    <property type="match status" value="1"/>
</dbReference>
<dbReference type="PANTHER" id="PTHR11922">
    <property type="entry name" value="GMP SYNTHASE-RELATED"/>
    <property type="match status" value="1"/>
</dbReference>
<dbReference type="Pfam" id="PF00117">
    <property type="entry name" value="GATase"/>
    <property type="match status" value="1"/>
</dbReference>
<dbReference type="Pfam" id="PF00958">
    <property type="entry name" value="GMP_synt_C"/>
    <property type="match status" value="1"/>
</dbReference>
<dbReference type="Pfam" id="PF02540">
    <property type="entry name" value="NAD_synthase"/>
    <property type="match status" value="1"/>
</dbReference>
<dbReference type="PRINTS" id="PR00097">
    <property type="entry name" value="ANTSNTHASEII"/>
</dbReference>
<dbReference type="PRINTS" id="PR00099">
    <property type="entry name" value="CPSGATASE"/>
</dbReference>
<dbReference type="PRINTS" id="PR00096">
    <property type="entry name" value="GATASE"/>
</dbReference>
<dbReference type="SUPFAM" id="SSF52402">
    <property type="entry name" value="Adenine nucleotide alpha hydrolases-like"/>
    <property type="match status" value="1"/>
</dbReference>
<dbReference type="SUPFAM" id="SSF52317">
    <property type="entry name" value="Class I glutamine amidotransferase-like"/>
    <property type="match status" value="1"/>
</dbReference>
<dbReference type="SUPFAM" id="SSF54810">
    <property type="entry name" value="GMP synthetase C-terminal dimerisation domain"/>
    <property type="match status" value="1"/>
</dbReference>
<dbReference type="PROSITE" id="PS51273">
    <property type="entry name" value="GATASE_TYPE_1"/>
    <property type="match status" value="1"/>
</dbReference>
<dbReference type="PROSITE" id="PS51553">
    <property type="entry name" value="GMPS_ATP_PPASE"/>
    <property type="match status" value="1"/>
</dbReference>